<dbReference type="EMBL" id="CP001614">
    <property type="protein sequence ID" value="ACR13121.1"/>
    <property type="molecule type" value="Genomic_DNA"/>
</dbReference>
<dbReference type="RefSeq" id="WP_015819234.1">
    <property type="nucleotide sequence ID" value="NC_012997.1"/>
</dbReference>
<dbReference type="SMR" id="C5BP09"/>
<dbReference type="STRING" id="377629.TERTU_3023"/>
<dbReference type="GeneID" id="58410429"/>
<dbReference type="GeneID" id="93855840"/>
<dbReference type="KEGG" id="ttu:TERTU_3023"/>
<dbReference type="eggNOG" id="COG0234">
    <property type="taxonomic scope" value="Bacteria"/>
</dbReference>
<dbReference type="HOGENOM" id="CLU_132825_2_0_6"/>
<dbReference type="OrthoDB" id="9806791at2"/>
<dbReference type="Proteomes" id="UP000009080">
    <property type="component" value="Chromosome"/>
</dbReference>
<dbReference type="GO" id="GO:0005737">
    <property type="term" value="C:cytoplasm"/>
    <property type="evidence" value="ECO:0007669"/>
    <property type="project" value="UniProtKB-SubCell"/>
</dbReference>
<dbReference type="GO" id="GO:0005524">
    <property type="term" value="F:ATP binding"/>
    <property type="evidence" value="ECO:0007669"/>
    <property type="project" value="InterPro"/>
</dbReference>
<dbReference type="GO" id="GO:0046872">
    <property type="term" value="F:metal ion binding"/>
    <property type="evidence" value="ECO:0007669"/>
    <property type="project" value="TreeGrafter"/>
</dbReference>
<dbReference type="GO" id="GO:0044183">
    <property type="term" value="F:protein folding chaperone"/>
    <property type="evidence" value="ECO:0007669"/>
    <property type="project" value="InterPro"/>
</dbReference>
<dbReference type="GO" id="GO:0051087">
    <property type="term" value="F:protein-folding chaperone binding"/>
    <property type="evidence" value="ECO:0007669"/>
    <property type="project" value="TreeGrafter"/>
</dbReference>
<dbReference type="GO" id="GO:0051082">
    <property type="term" value="F:unfolded protein binding"/>
    <property type="evidence" value="ECO:0007669"/>
    <property type="project" value="TreeGrafter"/>
</dbReference>
<dbReference type="GO" id="GO:0051085">
    <property type="term" value="P:chaperone cofactor-dependent protein refolding"/>
    <property type="evidence" value="ECO:0007669"/>
    <property type="project" value="TreeGrafter"/>
</dbReference>
<dbReference type="CDD" id="cd00320">
    <property type="entry name" value="cpn10"/>
    <property type="match status" value="1"/>
</dbReference>
<dbReference type="FunFam" id="2.30.33.40:FF:000001">
    <property type="entry name" value="10 kDa chaperonin"/>
    <property type="match status" value="1"/>
</dbReference>
<dbReference type="Gene3D" id="2.30.33.40">
    <property type="entry name" value="GroES chaperonin"/>
    <property type="match status" value="1"/>
</dbReference>
<dbReference type="HAMAP" id="MF_00580">
    <property type="entry name" value="CH10"/>
    <property type="match status" value="1"/>
</dbReference>
<dbReference type="InterPro" id="IPR020818">
    <property type="entry name" value="Chaperonin_GroES"/>
</dbReference>
<dbReference type="InterPro" id="IPR037124">
    <property type="entry name" value="Chaperonin_GroES_sf"/>
</dbReference>
<dbReference type="InterPro" id="IPR018369">
    <property type="entry name" value="Chaprnonin_Cpn10_CS"/>
</dbReference>
<dbReference type="InterPro" id="IPR011032">
    <property type="entry name" value="GroES-like_sf"/>
</dbReference>
<dbReference type="NCBIfam" id="NF001527">
    <property type="entry name" value="PRK00364.1-2"/>
    <property type="match status" value="1"/>
</dbReference>
<dbReference type="NCBIfam" id="NF001531">
    <property type="entry name" value="PRK00364.2-2"/>
    <property type="match status" value="1"/>
</dbReference>
<dbReference type="NCBIfam" id="NF001533">
    <property type="entry name" value="PRK00364.2-4"/>
    <property type="match status" value="1"/>
</dbReference>
<dbReference type="NCBIfam" id="NF001534">
    <property type="entry name" value="PRK00364.2-5"/>
    <property type="match status" value="1"/>
</dbReference>
<dbReference type="PANTHER" id="PTHR10772">
    <property type="entry name" value="10 KDA HEAT SHOCK PROTEIN"/>
    <property type="match status" value="1"/>
</dbReference>
<dbReference type="PANTHER" id="PTHR10772:SF58">
    <property type="entry name" value="CO-CHAPERONIN GROES"/>
    <property type="match status" value="1"/>
</dbReference>
<dbReference type="Pfam" id="PF00166">
    <property type="entry name" value="Cpn10"/>
    <property type="match status" value="1"/>
</dbReference>
<dbReference type="PRINTS" id="PR00297">
    <property type="entry name" value="CHAPERONIN10"/>
</dbReference>
<dbReference type="SMART" id="SM00883">
    <property type="entry name" value="Cpn10"/>
    <property type="match status" value="1"/>
</dbReference>
<dbReference type="SUPFAM" id="SSF50129">
    <property type="entry name" value="GroES-like"/>
    <property type="match status" value="1"/>
</dbReference>
<dbReference type="PROSITE" id="PS00681">
    <property type="entry name" value="CHAPERONINS_CPN10"/>
    <property type="match status" value="1"/>
</dbReference>
<evidence type="ECO:0000255" key="1">
    <source>
        <dbReference type="HAMAP-Rule" id="MF_00580"/>
    </source>
</evidence>
<name>CH10_TERTT</name>
<protein>
    <recommendedName>
        <fullName evidence="1">Co-chaperonin GroES</fullName>
    </recommendedName>
    <alternativeName>
        <fullName evidence="1">10 kDa chaperonin</fullName>
    </alternativeName>
    <alternativeName>
        <fullName evidence="1">Chaperonin-10</fullName>
        <shortName evidence="1">Cpn10</shortName>
    </alternativeName>
</protein>
<reference key="1">
    <citation type="journal article" date="2009" name="PLoS ONE">
        <title>The complete genome of Teredinibacter turnerae T7901: an intracellular endosymbiont of marine wood-boring bivalves (shipworms).</title>
        <authorList>
            <person name="Yang J.C."/>
            <person name="Madupu R."/>
            <person name="Durkin A.S."/>
            <person name="Ekborg N.A."/>
            <person name="Pedamallu C.S."/>
            <person name="Hostetler J.B."/>
            <person name="Radune D."/>
            <person name="Toms B.S."/>
            <person name="Henrissat B."/>
            <person name="Coutinho P.M."/>
            <person name="Schwarz S."/>
            <person name="Field L."/>
            <person name="Trindade-Silva A.E."/>
            <person name="Soares C.A.G."/>
            <person name="Elshahawi S."/>
            <person name="Hanora A."/>
            <person name="Schmidt E.W."/>
            <person name="Haygood M.G."/>
            <person name="Posfai J."/>
            <person name="Benner J."/>
            <person name="Madinger C."/>
            <person name="Nove J."/>
            <person name="Anton B."/>
            <person name="Chaudhary K."/>
            <person name="Foster J."/>
            <person name="Holman A."/>
            <person name="Kumar S."/>
            <person name="Lessard P.A."/>
            <person name="Luyten Y.A."/>
            <person name="Slatko B."/>
            <person name="Wood N."/>
            <person name="Wu B."/>
            <person name="Teplitski M."/>
            <person name="Mougous J.D."/>
            <person name="Ward N."/>
            <person name="Eisen J.A."/>
            <person name="Badger J.H."/>
            <person name="Distel D.L."/>
        </authorList>
    </citation>
    <scope>NUCLEOTIDE SEQUENCE [LARGE SCALE GENOMIC DNA]</scope>
    <source>
        <strain>ATCC 39867 / T7901</strain>
    </source>
</reference>
<gene>
    <name evidence="1" type="primary">groES</name>
    <name evidence="1" type="synonym">groS</name>
    <name type="ordered locus">TERTU_3023</name>
</gene>
<keyword id="KW-0143">Chaperone</keyword>
<keyword id="KW-0963">Cytoplasm</keyword>
<keyword id="KW-1185">Reference proteome</keyword>
<proteinExistence type="inferred from homology"/>
<comment type="function">
    <text evidence="1">Together with the chaperonin GroEL, plays an essential role in assisting protein folding. The GroEL-GroES system forms a nano-cage that allows encapsulation of the non-native substrate proteins and provides a physical environment optimized to promote and accelerate protein folding. GroES binds to the apical surface of the GroEL ring, thereby capping the opening of the GroEL channel.</text>
</comment>
<comment type="subunit">
    <text evidence="1">Heptamer of 7 subunits arranged in a ring. Interacts with the chaperonin GroEL.</text>
</comment>
<comment type="subcellular location">
    <subcellularLocation>
        <location evidence="1">Cytoplasm</location>
    </subcellularLocation>
</comment>
<comment type="similarity">
    <text evidence="1">Belongs to the GroES chaperonin family.</text>
</comment>
<organism>
    <name type="scientific">Teredinibacter turnerae (strain ATCC 39867 / T7901)</name>
    <dbReference type="NCBI Taxonomy" id="377629"/>
    <lineage>
        <taxon>Bacteria</taxon>
        <taxon>Pseudomonadati</taxon>
        <taxon>Pseudomonadota</taxon>
        <taxon>Gammaproteobacteria</taxon>
        <taxon>Cellvibrionales</taxon>
        <taxon>Cellvibrionaceae</taxon>
        <taxon>Teredinibacter</taxon>
    </lineage>
</organism>
<sequence>MNIRPLHDRVVVRRKEEEEKSAGGIVLPGSAKEKPNQGEVVAVGSGRVLDNGETRPVDVKVGDTVVFGKYAGSDTIEINGEELVILSESDIKAIIE</sequence>
<accession>C5BP09</accession>
<feature type="chain" id="PRO_1000212126" description="Co-chaperonin GroES">
    <location>
        <begin position="1"/>
        <end position="96"/>
    </location>
</feature>